<keyword id="KW-0963">Cytoplasm</keyword>
<keyword id="KW-0460">Magnesium</keyword>
<keyword id="KW-0479">Metal-binding</keyword>
<keyword id="KW-0548">Nucleotidyltransferase</keyword>
<keyword id="KW-0694">RNA-binding</keyword>
<keyword id="KW-0808">Transferase</keyword>
<comment type="function">
    <text evidence="1">Involved in mRNA degradation. Catalyzes the phosphorolysis of single-stranded polyribonucleotides processively in the 3'- to 5'-direction.</text>
</comment>
<comment type="catalytic activity">
    <reaction evidence="1">
        <text>RNA(n+1) + phosphate = RNA(n) + a ribonucleoside 5'-diphosphate</text>
        <dbReference type="Rhea" id="RHEA:22096"/>
        <dbReference type="Rhea" id="RHEA-COMP:14527"/>
        <dbReference type="Rhea" id="RHEA-COMP:17342"/>
        <dbReference type="ChEBI" id="CHEBI:43474"/>
        <dbReference type="ChEBI" id="CHEBI:57930"/>
        <dbReference type="ChEBI" id="CHEBI:140395"/>
        <dbReference type="EC" id="2.7.7.8"/>
    </reaction>
</comment>
<comment type="cofactor">
    <cofactor evidence="1">
        <name>Mg(2+)</name>
        <dbReference type="ChEBI" id="CHEBI:18420"/>
    </cofactor>
</comment>
<comment type="subunit">
    <text evidence="1">Component of the RNA degradosome, which is a multiprotein complex involved in RNA processing and mRNA degradation.</text>
</comment>
<comment type="subcellular location">
    <subcellularLocation>
        <location evidence="1">Cytoplasm</location>
    </subcellularLocation>
</comment>
<comment type="similarity">
    <text evidence="1">Belongs to the polyribonucleotide nucleotidyltransferase family.</text>
</comment>
<name>PNP_YERPG</name>
<gene>
    <name evidence="1" type="primary">pnp</name>
    <name type="ordered locus">YpAngola_A3999</name>
</gene>
<evidence type="ECO:0000255" key="1">
    <source>
        <dbReference type="HAMAP-Rule" id="MF_01595"/>
    </source>
</evidence>
<proteinExistence type="inferred from homology"/>
<reference key="1">
    <citation type="journal article" date="2010" name="J. Bacteriol.">
        <title>Genome sequence of the deep-rooted Yersinia pestis strain Angola reveals new insights into the evolution and pangenome of the plague bacterium.</title>
        <authorList>
            <person name="Eppinger M."/>
            <person name="Worsham P.L."/>
            <person name="Nikolich M.P."/>
            <person name="Riley D.R."/>
            <person name="Sebastian Y."/>
            <person name="Mou S."/>
            <person name="Achtman M."/>
            <person name="Lindler L.E."/>
            <person name="Ravel J."/>
        </authorList>
    </citation>
    <scope>NUCLEOTIDE SEQUENCE [LARGE SCALE GENOMIC DNA]</scope>
    <source>
        <strain>Angola</strain>
    </source>
</reference>
<accession>A9R5A9</accession>
<feature type="chain" id="PRO_1000192510" description="Polyribonucleotide nucleotidyltransferase">
    <location>
        <begin position="1"/>
        <end position="705"/>
    </location>
</feature>
<feature type="domain" description="KH" evidence="1">
    <location>
        <begin position="553"/>
        <end position="612"/>
    </location>
</feature>
<feature type="domain" description="S1 motif" evidence="1">
    <location>
        <begin position="622"/>
        <end position="690"/>
    </location>
</feature>
<feature type="binding site" evidence="1">
    <location>
        <position position="486"/>
    </location>
    <ligand>
        <name>Mg(2+)</name>
        <dbReference type="ChEBI" id="CHEBI:18420"/>
    </ligand>
</feature>
<feature type="binding site" evidence="1">
    <location>
        <position position="492"/>
    </location>
    <ligand>
        <name>Mg(2+)</name>
        <dbReference type="ChEBI" id="CHEBI:18420"/>
    </ligand>
</feature>
<sequence>MLTPIIRKFQYGQHTVTIETGMMARQATAAVMVSMDDTAVFVTVVGQKKAKPGQSFFPLTVNYQERTYAAGRIPGSFFRREGRPSEGETLTSRLIDRPIRPLFPDSFLNEVQVIATVVSVNPQINPDIVALIGASAALSLSGIPFNGPIGAARVGFINDQYVLNPTTDELKESRLDLVVAGTAGAVLMVESEADILSEEQMLGAVVFGHEQQQVVIENINALVAEAGKPKWDWQAEPVNEALHARVAELAEARLGDAYRITEKQERYTQVDAIKADVTEALLAQDDTLDAAEIQDILASVEKNVVRSRVLRGEPRIDGREKDMIRGLDVRTGILPRTHGSALFTRGETQALVTATLGTARDAQNIDELMGERTDSFLLHYNFPPYCVGETGMVGSPKRREIGHGRLAKRGVLAVMPSASEFPYTIRVVSEITESNGSSSMASVCGASLALMDAGVPIKAAVAGIAMGLVKEGDNFVVLSDILGDEDHLGDMDFKVAGSRDGVTALQMDIKIEGITREIMQVALNQAKGARLHILGVMEQAISTPRGDISEFAPRIYTMKINPEKIKDVIGKGGSVIRALTDETGTTIEIEDDGTIKIAATDGDKAKHAIRRIEEITAEIEVGRIYAGKVTRIVDFGAFVAIGGGKEGLVHISQIADKRVEKVTDYLQMGQDVPVKVMEVDRQGRIRLSIKEATTPDAEAPEAAAE</sequence>
<protein>
    <recommendedName>
        <fullName evidence="1">Polyribonucleotide nucleotidyltransferase</fullName>
        <ecNumber evidence="1">2.7.7.8</ecNumber>
    </recommendedName>
    <alternativeName>
        <fullName evidence="1">Polynucleotide phosphorylase</fullName>
        <shortName evidence="1">PNPase</shortName>
    </alternativeName>
</protein>
<dbReference type="EC" id="2.7.7.8" evidence="1"/>
<dbReference type="EMBL" id="CP000901">
    <property type="protein sequence ID" value="ABX85104.1"/>
    <property type="molecule type" value="Genomic_DNA"/>
</dbReference>
<dbReference type="RefSeq" id="WP_002209259.1">
    <property type="nucleotide sequence ID" value="NZ_CP009935.1"/>
</dbReference>
<dbReference type="SMR" id="A9R5A9"/>
<dbReference type="GeneID" id="57975224"/>
<dbReference type="KEGG" id="ypg:YpAngola_A3999"/>
<dbReference type="PATRIC" id="fig|349746.12.peg.723"/>
<dbReference type="GO" id="GO:0005829">
    <property type="term" value="C:cytosol"/>
    <property type="evidence" value="ECO:0007669"/>
    <property type="project" value="TreeGrafter"/>
</dbReference>
<dbReference type="GO" id="GO:0000175">
    <property type="term" value="F:3'-5'-RNA exonuclease activity"/>
    <property type="evidence" value="ECO:0007669"/>
    <property type="project" value="TreeGrafter"/>
</dbReference>
<dbReference type="GO" id="GO:0000287">
    <property type="term" value="F:magnesium ion binding"/>
    <property type="evidence" value="ECO:0007669"/>
    <property type="project" value="UniProtKB-UniRule"/>
</dbReference>
<dbReference type="GO" id="GO:0004654">
    <property type="term" value="F:polyribonucleotide nucleotidyltransferase activity"/>
    <property type="evidence" value="ECO:0007669"/>
    <property type="project" value="UniProtKB-UniRule"/>
</dbReference>
<dbReference type="GO" id="GO:0003723">
    <property type="term" value="F:RNA binding"/>
    <property type="evidence" value="ECO:0007669"/>
    <property type="project" value="UniProtKB-UniRule"/>
</dbReference>
<dbReference type="GO" id="GO:0006402">
    <property type="term" value="P:mRNA catabolic process"/>
    <property type="evidence" value="ECO:0007669"/>
    <property type="project" value="UniProtKB-UniRule"/>
</dbReference>
<dbReference type="GO" id="GO:0006396">
    <property type="term" value="P:RNA processing"/>
    <property type="evidence" value="ECO:0007669"/>
    <property type="project" value="InterPro"/>
</dbReference>
<dbReference type="CDD" id="cd02393">
    <property type="entry name" value="KH-I_PNPase"/>
    <property type="match status" value="1"/>
</dbReference>
<dbReference type="CDD" id="cd11363">
    <property type="entry name" value="RNase_PH_PNPase_1"/>
    <property type="match status" value="1"/>
</dbReference>
<dbReference type="CDD" id="cd11364">
    <property type="entry name" value="RNase_PH_PNPase_2"/>
    <property type="match status" value="1"/>
</dbReference>
<dbReference type="CDD" id="cd04472">
    <property type="entry name" value="S1_PNPase"/>
    <property type="match status" value="1"/>
</dbReference>
<dbReference type="FunFam" id="2.40.50.140:FF:000023">
    <property type="entry name" value="Polyribonucleotide nucleotidyltransferase"/>
    <property type="match status" value="1"/>
</dbReference>
<dbReference type="FunFam" id="3.30.1370.10:FF:000001">
    <property type="entry name" value="Polyribonucleotide nucleotidyltransferase"/>
    <property type="match status" value="1"/>
</dbReference>
<dbReference type="FunFam" id="3.30.230.70:FF:000001">
    <property type="entry name" value="Polyribonucleotide nucleotidyltransferase"/>
    <property type="match status" value="1"/>
</dbReference>
<dbReference type="FunFam" id="3.30.230.70:FF:000002">
    <property type="entry name" value="Polyribonucleotide nucleotidyltransferase"/>
    <property type="match status" value="1"/>
</dbReference>
<dbReference type="Gene3D" id="3.30.230.70">
    <property type="entry name" value="GHMP Kinase, N-terminal domain"/>
    <property type="match status" value="2"/>
</dbReference>
<dbReference type="Gene3D" id="3.30.1370.10">
    <property type="entry name" value="K Homology domain, type 1"/>
    <property type="match status" value="1"/>
</dbReference>
<dbReference type="Gene3D" id="2.40.50.140">
    <property type="entry name" value="Nucleic acid-binding proteins"/>
    <property type="match status" value="1"/>
</dbReference>
<dbReference type="HAMAP" id="MF_01595">
    <property type="entry name" value="PNPase"/>
    <property type="match status" value="1"/>
</dbReference>
<dbReference type="InterPro" id="IPR001247">
    <property type="entry name" value="ExoRNase_PH_dom1"/>
</dbReference>
<dbReference type="InterPro" id="IPR015847">
    <property type="entry name" value="ExoRNase_PH_dom2"/>
</dbReference>
<dbReference type="InterPro" id="IPR036345">
    <property type="entry name" value="ExoRNase_PH_dom2_sf"/>
</dbReference>
<dbReference type="InterPro" id="IPR004087">
    <property type="entry name" value="KH_dom"/>
</dbReference>
<dbReference type="InterPro" id="IPR004088">
    <property type="entry name" value="KH_dom_type_1"/>
</dbReference>
<dbReference type="InterPro" id="IPR036612">
    <property type="entry name" value="KH_dom_type_1_sf"/>
</dbReference>
<dbReference type="InterPro" id="IPR012340">
    <property type="entry name" value="NA-bd_OB-fold"/>
</dbReference>
<dbReference type="InterPro" id="IPR012162">
    <property type="entry name" value="PNPase"/>
</dbReference>
<dbReference type="InterPro" id="IPR027408">
    <property type="entry name" value="PNPase/RNase_PH_dom_sf"/>
</dbReference>
<dbReference type="InterPro" id="IPR015848">
    <property type="entry name" value="PNPase_PH_RNA-bd_bac/org-type"/>
</dbReference>
<dbReference type="InterPro" id="IPR036456">
    <property type="entry name" value="PNPase_PH_RNA-bd_sf"/>
</dbReference>
<dbReference type="InterPro" id="IPR020568">
    <property type="entry name" value="Ribosomal_Su5_D2-typ_SF"/>
</dbReference>
<dbReference type="InterPro" id="IPR003029">
    <property type="entry name" value="S1_domain"/>
</dbReference>
<dbReference type="NCBIfam" id="TIGR03591">
    <property type="entry name" value="polynuc_phos"/>
    <property type="match status" value="1"/>
</dbReference>
<dbReference type="NCBIfam" id="NF008805">
    <property type="entry name" value="PRK11824.1"/>
    <property type="match status" value="1"/>
</dbReference>
<dbReference type="PANTHER" id="PTHR11252">
    <property type="entry name" value="POLYRIBONUCLEOTIDE NUCLEOTIDYLTRANSFERASE"/>
    <property type="match status" value="1"/>
</dbReference>
<dbReference type="PANTHER" id="PTHR11252:SF0">
    <property type="entry name" value="POLYRIBONUCLEOTIDE NUCLEOTIDYLTRANSFERASE 1, MITOCHONDRIAL"/>
    <property type="match status" value="1"/>
</dbReference>
<dbReference type="Pfam" id="PF00013">
    <property type="entry name" value="KH_1"/>
    <property type="match status" value="1"/>
</dbReference>
<dbReference type="Pfam" id="PF03726">
    <property type="entry name" value="PNPase"/>
    <property type="match status" value="1"/>
</dbReference>
<dbReference type="Pfam" id="PF01138">
    <property type="entry name" value="RNase_PH"/>
    <property type="match status" value="2"/>
</dbReference>
<dbReference type="Pfam" id="PF03725">
    <property type="entry name" value="RNase_PH_C"/>
    <property type="match status" value="2"/>
</dbReference>
<dbReference type="Pfam" id="PF00575">
    <property type="entry name" value="S1"/>
    <property type="match status" value="1"/>
</dbReference>
<dbReference type="PIRSF" id="PIRSF005499">
    <property type="entry name" value="PNPase"/>
    <property type="match status" value="1"/>
</dbReference>
<dbReference type="SMART" id="SM00322">
    <property type="entry name" value="KH"/>
    <property type="match status" value="1"/>
</dbReference>
<dbReference type="SMART" id="SM00316">
    <property type="entry name" value="S1"/>
    <property type="match status" value="1"/>
</dbReference>
<dbReference type="SUPFAM" id="SSF54791">
    <property type="entry name" value="Eukaryotic type KH-domain (KH-domain type I)"/>
    <property type="match status" value="1"/>
</dbReference>
<dbReference type="SUPFAM" id="SSF50249">
    <property type="entry name" value="Nucleic acid-binding proteins"/>
    <property type="match status" value="1"/>
</dbReference>
<dbReference type="SUPFAM" id="SSF46915">
    <property type="entry name" value="Polynucleotide phosphorylase/guanosine pentaphosphate synthase (PNPase/GPSI), domain 3"/>
    <property type="match status" value="1"/>
</dbReference>
<dbReference type="SUPFAM" id="SSF55666">
    <property type="entry name" value="Ribonuclease PH domain 2-like"/>
    <property type="match status" value="2"/>
</dbReference>
<dbReference type="SUPFAM" id="SSF54211">
    <property type="entry name" value="Ribosomal protein S5 domain 2-like"/>
    <property type="match status" value="2"/>
</dbReference>
<dbReference type="PROSITE" id="PS50084">
    <property type="entry name" value="KH_TYPE_1"/>
    <property type="match status" value="1"/>
</dbReference>
<dbReference type="PROSITE" id="PS50126">
    <property type="entry name" value="S1"/>
    <property type="match status" value="1"/>
</dbReference>
<organism>
    <name type="scientific">Yersinia pestis bv. Antiqua (strain Angola)</name>
    <dbReference type="NCBI Taxonomy" id="349746"/>
    <lineage>
        <taxon>Bacteria</taxon>
        <taxon>Pseudomonadati</taxon>
        <taxon>Pseudomonadota</taxon>
        <taxon>Gammaproteobacteria</taxon>
        <taxon>Enterobacterales</taxon>
        <taxon>Yersiniaceae</taxon>
        <taxon>Yersinia</taxon>
    </lineage>
</organism>